<sequence length="447" mass="47921">MALNRLVFSLSLWLGFIGAAQAASSEPLPPSKDPWYTAPPGFESAEPGTVLRVRPAPGNLTSITANSSASYNILYRTTDSHFKPTWAVTTLLVPELGPDSLAQQKFQQSALLSFQVPYDSADVDASPSYSMYSASNDSSAPYTAALGSGLFVSVPDYEGPLAAFTAGIISGYATLDSIRAVLSLGLGLNITNSPRAALWGYSGGAFATEWASELAVQYAPDLVAGPVVGAAMGAPLANITTFMHSVNGQATSGLVPNTLLGLTSQYPDVRKYLVSKLNDDSEYNRTGFLAAEGFTVTESGVAFAGIDINKYFQNGTDILNDPKILALVNREGIMGYHGVPKWPLFIYQAIPDEVTPISATDALVEKYCAVGADILYERNTVGSHYEETNNSYKAAVQWLEDVFSSQHDINRAQGCVIQDVTRNTTSGDLVRRKDVQKSVFDLWSAAW</sequence>
<protein>
    <recommendedName>
        <fullName evidence="18">Trichothecene C-3 esterase</fullName>
        <ecNumber evidence="6">3.1.1.-</ecNumber>
    </recommendedName>
    <alternativeName>
        <fullName evidence="17">Core trichothecene cluster (CTC) protein 8</fullName>
    </alternativeName>
</protein>
<keyword id="KW-0325">Glycoprotein</keyword>
<keyword id="KW-0378">Hydrolase</keyword>
<keyword id="KW-0732">Signal</keyword>
<organism>
    <name type="scientific">Fusarium sporotrichioides</name>
    <dbReference type="NCBI Taxonomy" id="5514"/>
    <lineage>
        <taxon>Eukaryota</taxon>
        <taxon>Fungi</taxon>
        <taxon>Dikarya</taxon>
        <taxon>Ascomycota</taxon>
        <taxon>Pezizomycotina</taxon>
        <taxon>Sordariomycetes</taxon>
        <taxon>Hypocreomycetidae</taxon>
        <taxon>Hypocreales</taxon>
        <taxon>Nectriaceae</taxon>
        <taxon>Fusarium</taxon>
    </lineage>
</organism>
<proteinExistence type="evidence at protein level"/>
<comment type="function">
    <text evidence="4 5 6 7 8 10 11 12 13 14 15 16">Trichothecene C-3 esterase; part of the core gene cluster that mediates the biosynthesis of trichothecenes, a very large family of chemically related bicyclic sesquiterpene compounds acting as mycotoxins, including T2-toxin (PubMed:11352533, PubMed:12039755). The biosynthesis of trichothecenes begins with the cyclization of farnesyl diphosphate to trichodiene and is catalyzed by the trichodiene synthase TRI5 (PubMed:3800398). Trichodiene undergoes a series of oxygenations catalyzed by the cytochrome P450 monooxygenase TRI4 (PubMed:7651333). TRI4 controls the addition of four oxygens at C-2, C-3, C-11, and the C-12, C-13-epoxide to form the intermediate isotrichotriol (PubMed:16917519). Isotrichotriol then undergoes a non-enzymatic isomerization and cyclization to form isotrichodermol (PubMed:2317042). During this process, the oxygen at the C-2 position becomes the pyran ring oxygen and the hydroxyl group at C-11 is lost (PubMed:2317042). More complex type A trichothecenes are built by modifying isotrichodermol through a series of paired hydroxylation and acetylation or acylation steps (PubMed:11352533). Isotrichodermol is converted to isotrichodermin by the acetyltransferase TRI101 (PubMed:10583973). TRI101 encodes a C-3 transacetylase that acts as a self-protection or resistance factor during biosynthesis and that the presence of a free C-3 hydroxyl group is a key component of Fusarium trichothecene phytotoxicity (PubMed:10583973). A second hydroxyl group is added to C-15 by the trichothecene C-15 hydroxylase TRI11, producing 15-decalonectrin, which is then acetylated by TRI3, producing calonectrin (PubMed:8593041, PubMed:9435078). A third hydroxyl group is added at C-4 by the cytochrome P450 monooxygenase TRI13, converting calonectrin to 3,15-diacetoxyspirpenol, which is subsequently acetylated by the acetyltransferase TRI7 (PubMed:11352533, PubMed:12135578). A fourth hydroxyl group is added to C-8 by the cytochrome P450 monooxygenase TRI1, followed by the addition of an isovaleryl moiety by TRI16 (PubMed:12620849, PubMed:14532047). Finally, the acetyl group is removed from the C-3 position by the trichothecene C-3 esterase TRI8 to produce T-2 toxin (PubMed:12039755).</text>
</comment>
<comment type="pathway">
    <text evidence="6">Sesquiterpene biosynthesis; trichothecene biosynthesis.</text>
</comment>
<comment type="induction">
    <text evidence="9">Expression is positively regulated by the trichothecene cluster-specific transcription activator TRI10 (PubMed:12732543).</text>
</comment>
<comment type="disruption phenotype">
    <text evidence="5">Does not produce T-2 toxin, but accumulates 4,15-diacetoxyscirpenol, presumably by 3-deacetylation of 3,4,15-diacetoxyscirpenol (PubMed:11352533).</text>
</comment>
<comment type="miscellaneous">
    <text evidence="19">Trichothecenes are sesquiterpenoid toxins that act by inhibiting protein biosynthesis.</text>
</comment>
<comment type="similarity">
    <text evidence="19">Belongs to the AB hydrolase superfamily. Lipase family.</text>
</comment>
<feature type="signal peptide" evidence="2">
    <location>
        <begin position="1"/>
        <end position="22"/>
    </location>
</feature>
<feature type="chain" id="PRO_5007716291" description="Trichothecene C-3 esterase">
    <location>
        <begin position="23"/>
        <end position="447"/>
    </location>
</feature>
<feature type="active site" description="Charge relay system" evidence="1">
    <location>
        <position position="202"/>
    </location>
</feature>
<feature type="active site" description="Charge relay system" evidence="1">
    <location>
        <position position="352"/>
    </location>
</feature>
<feature type="active site" description="Charge relay system" evidence="1">
    <location>
        <position position="384"/>
    </location>
</feature>
<feature type="glycosylation site" description="N-linked (GlcNAc...) asparagine" evidence="3">
    <location>
        <position position="59"/>
    </location>
</feature>
<feature type="glycosylation site" description="N-linked (GlcNAc...) asparagine" evidence="3">
    <location>
        <position position="66"/>
    </location>
</feature>
<feature type="glycosylation site" description="N-linked (GlcNAc...) asparagine" evidence="3">
    <location>
        <position position="136"/>
    </location>
</feature>
<feature type="glycosylation site" description="N-linked (GlcNAc...) asparagine" evidence="3">
    <location>
        <position position="189"/>
    </location>
</feature>
<feature type="glycosylation site" description="N-linked (GlcNAc...) asparagine" evidence="3">
    <location>
        <position position="238"/>
    </location>
</feature>
<feature type="glycosylation site" description="N-linked (GlcNAc...) asparagine" evidence="3">
    <location>
        <position position="284"/>
    </location>
</feature>
<feature type="glycosylation site" description="N-linked (GlcNAc...) asparagine" evidence="3">
    <location>
        <position position="314"/>
    </location>
</feature>
<feature type="glycosylation site" description="N-linked (GlcNAc...) asparagine" evidence="3">
    <location>
        <position position="389"/>
    </location>
</feature>
<feature type="glycosylation site" description="N-linked (GlcNAc...) asparagine" evidence="3">
    <location>
        <position position="423"/>
    </location>
</feature>
<reference key="1">
    <citation type="journal article" date="2001" name="Fungal Genet. Biol.">
        <title>A genetic and biochemical approach to study trichothecene diversity in Fusarium sporotrichioides and Fusarium graminearum.</title>
        <authorList>
            <person name="Brown D.W."/>
            <person name="McCormick S.P."/>
            <person name="Alexander N.J."/>
            <person name="Proctor R.H."/>
            <person name="Desjardins A.E."/>
        </authorList>
    </citation>
    <scope>NUCLEOTIDE SEQUENCE [GENOMIC DNA]</scope>
    <scope>FUNCTION</scope>
    <scope>DISRUPTION PHENOTYPE</scope>
    <source>
        <strain>ATCC 24631 / NRRL 3299</strain>
    </source>
</reference>
<reference key="2">
    <citation type="submission" date="2001-04" db="EMBL/GenBank/DDBJ databases">
        <title>Fusarium sporotrichioides TRI8 cDNA.</title>
        <authorList>
            <person name="Ren Q."/>
            <person name="Tag A."/>
            <person name="Peplow A."/>
            <person name="Lai H."/>
            <person name="Kupfer D."/>
            <person name="Peterson A."/>
            <person name="Beremand M."/>
            <person name="Roe B."/>
        </authorList>
    </citation>
    <scope>NUCLEOTIDE SEQUENCE [MRNA]</scope>
</reference>
<reference key="3">
    <citation type="journal article" date="1986" name="Arch. Biochem. Biophys.">
        <title>Purification and characterization of the sesquiterpene cyclase trichodiene synthetase from Fusarium sporotrichioides.</title>
        <authorList>
            <person name="Hohn T.M."/>
            <person name="Vanmiddlesworth F."/>
        </authorList>
    </citation>
    <scope>FUNCTION</scope>
</reference>
<reference key="4">
    <citation type="journal article" date="1990" name="Appl. Environ. Microbiol.">
        <title>Bioconversion of possible T-2 toxin precursors by a mutant strain of Fusarium sporotrichioides NRRL 3299.</title>
        <authorList>
            <person name="McCormick S.P."/>
            <person name="Taylor S.L."/>
            <person name="Plattner R.D."/>
            <person name="Beremand M.N."/>
        </authorList>
    </citation>
    <scope>FUNCTION</scope>
</reference>
<reference key="5">
    <citation type="journal article" date="1995" name="Mol. Gen. Genet.">
        <title>The Tri4 gene of Fusarium sporotrichioides encodes a cytochrome P450 monooxygenase involved in trichothecene biosynthesis.</title>
        <authorList>
            <person name="Hohn T.M."/>
            <person name="Desjardins A.E."/>
            <person name="McCormick S.P."/>
        </authorList>
    </citation>
    <scope>FUNCTION</scope>
</reference>
<reference key="6">
    <citation type="journal article" date="1996" name="Appl. Environ. Microbiol.">
        <title>Isolation and characterization of Tri3, a gene encoding 15-O-acetyltransferase from Fusarium sporotrichioides.</title>
        <authorList>
            <person name="McCormick S.P."/>
            <person name="Hohn T.M."/>
            <person name="Desjardins A.E."/>
        </authorList>
    </citation>
    <scope>FUNCTION</scope>
</reference>
<reference key="7">
    <citation type="journal article" date="1998" name="Appl. Environ. Microbiol.">
        <title>The TRI11 gene of Fusarium sporotrichioides encodes a cytochrome P-450 monooxygenase required for C-15 hydroxylation in trichothecene biosynthesis.</title>
        <authorList>
            <person name="Alexander N.J."/>
            <person name="Hohn T.M."/>
            <person name="McCormick S.P."/>
        </authorList>
    </citation>
    <scope>FUNCTION</scope>
</reference>
<reference key="8">
    <citation type="journal article" date="1999" name="Appl. Environ. Microbiol.">
        <title>Disruption of TRI101, the gene encoding trichothecene 3-O-acetyltransferase, from Fusarium sporotrichioides.</title>
        <authorList>
            <person name="McCormick S.P."/>
            <person name="Alexander N.J."/>
            <person name="Trapp S.E."/>
            <person name="Hohn T.M."/>
        </authorList>
    </citation>
    <scope>FUNCTION</scope>
</reference>
<reference key="9">
    <citation type="journal article" date="2002" name="Appl. Environ. Microbiol.">
        <title>Fusarium Tri8 encodes a trichothecene C-3 esterase.</title>
        <authorList>
            <person name="McCormick S.P."/>
            <person name="Alexander N.J."/>
        </authorList>
    </citation>
    <scope>FUNCTION</scope>
    <scope>DISRUPTION PHENOTYPE</scope>
    <scope>CATALYTIC ACTIVITY</scope>
    <scope>PATHWAY</scope>
</reference>
<reference key="10">
    <citation type="journal article" date="2002" name="Fungal Genet. Biol.">
        <title>Inactivation of a cytochrome P-450 is a determinant of trichothecene diversity in Fusarium species.</title>
        <authorList>
            <person name="Brown D.W."/>
            <person name="McCormick S.P."/>
            <person name="Alexander N.J."/>
            <person name="Proctor R.H."/>
            <person name="Desjardins A.E."/>
        </authorList>
    </citation>
    <scope>FUNCTION</scope>
</reference>
<reference key="11">
    <citation type="journal article" date="2003" name="Appl. Environ. Microbiol.">
        <title>Tri1 encodes the cytochrome P450 monooxygenase for C-8 hydroxylation during trichothecene biosynthesis in Fusarium sporotrichioides and resides upstream of another new Tri gene.</title>
        <authorList>
            <person name="Meek I.B."/>
            <person name="Peplow A.W."/>
            <person name="Ake C. Jr."/>
            <person name="Phillips T.D."/>
            <person name="Beremand M.N."/>
        </authorList>
    </citation>
    <scope>FUNCTION</scope>
</reference>
<reference key="12">
    <citation type="journal article" date="2003" name="Appl. Environ. Microbiol.">
        <title>Identification of new genes positively regulated by Tri10 and a regulatory network for trichothecene mycotoxin production.</title>
        <authorList>
            <person name="Peplow A.W."/>
            <person name="Tag A.G."/>
            <person name="Garifullina G.F."/>
            <person name="Beremand M.N."/>
        </authorList>
    </citation>
    <scope>INDUCTION</scope>
</reference>
<reference key="13">
    <citation type="journal article" date="2003" name="Appl. Environ. Microbiol.">
        <title>Tri16 is required for esterification of position C-8 during trichothecene mycotoxin production by Fusarium sporotrichioides.</title>
        <authorList>
            <person name="Peplow A.W."/>
            <person name="Meek I.B."/>
            <person name="Wiles M.C."/>
            <person name="Phillips T.D."/>
            <person name="Beremand M.N."/>
        </authorList>
    </citation>
    <scope>FUNCTION</scope>
</reference>
<reference key="14">
    <citation type="journal article" date="2006" name="Can. J. Microbiol.">
        <title>Fusarium Tri4 encodes a multifunctional oxygenase required for trichothecene biosynthesis.</title>
        <authorList>
            <person name="McCormick S.P."/>
            <person name="Alexander N.J."/>
            <person name="Proctor R.H."/>
        </authorList>
    </citation>
    <scope>FUNCTION</scope>
</reference>
<name>TRI8_FUSSP</name>
<dbReference type="EC" id="3.1.1.-" evidence="6"/>
<dbReference type="EMBL" id="AF359360">
    <property type="protein sequence ID" value="AAK33077.1"/>
    <property type="molecule type" value="Genomic_DNA"/>
</dbReference>
<dbReference type="EMBL" id="AY032744">
    <property type="protein sequence ID" value="AAK77934.1"/>
    <property type="molecule type" value="mRNA"/>
</dbReference>
<dbReference type="SMR" id="Q9C1B9"/>
<dbReference type="ESTHER" id="fussp-TRI8">
    <property type="family name" value="Fungal-Bact_LIP"/>
</dbReference>
<dbReference type="GlyCosmos" id="Q9C1B9">
    <property type="glycosylation" value="9 sites, No reported glycans"/>
</dbReference>
<dbReference type="UniPathway" id="UPA00267"/>
<dbReference type="GO" id="GO:0004806">
    <property type="term" value="F:triacylglycerol lipase activity"/>
    <property type="evidence" value="ECO:0007669"/>
    <property type="project" value="InterPro"/>
</dbReference>
<dbReference type="GO" id="GO:0016042">
    <property type="term" value="P:lipid catabolic process"/>
    <property type="evidence" value="ECO:0007669"/>
    <property type="project" value="InterPro"/>
</dbReference>
<dbReference type="Gene3D" id="1.10.260.130">
    <property type="match status" value="1"/>
</dbReference>
<dbReference type="Gene3D" id="3.40.50.1820">
    <property type="entry name" value="alpha/beta hydrolase"/>
    <property type="match status" value="1"/>
</dbReference>
<dbReference type="InterPro" id="IPR029058">
    <property type="entry name" value="AB_hydrolase_fold"/>
</dbReference>
<dbReference type="InterPro" id="IPR005152">
    <property type="entry name" value="Lipase_secreted"/>
</dbReference>
<dbReference type="PANTHER" id="PTHR34853">
    <property type="match status" value="1"/>
</dbReference>
<dbReference type="PANTHER" id="PTHR34853:SF5">
    <property type="entry name" value="LIP-DOMAIN-CONTAINING PROTEIN-RELATED"/>
    <property type="match status" value="1"/>
</dbReference>
<dbReference type="Pfam" id="PF03583">
    <property type="entry name" value="LIP"/>
    <property type="match status" value="1"/>
</dbReference>
<dbReference type="PIRSF" id="PIRSF029171">
    <property type="entry name" value="Esterase_LipA"/>
    <property type="match status" value="1"/>
</dbReference>
<dbReference type="SUPFAM" id="SSF53474">
    <property type="entry name" value="alpha/beta-Hydrolases"/>
    <property type="match status" value="1"/>
</dbReference>
<accession>Q9C1B9</accession>
<evidence type="ECO:0000250" key="1">
    <source>
        <dbReference type="UniProtKB" id="W3VKA4"/>
    </source>
</evidence>
<evidence type="ECO:0000255" key="2"/>
<evidence type="ECO:0000255" key="3">
    <source>
        <dbReference type="PROSITE-ProRule" id="PRU00498"/>
    </source>
</evidence>
<evidence type="ECO:0000269" key="4">
    <source>
    </source>
</evidence>
<evidence type="ECO:0000269" key="5">
    <source>
    </source>
</evidence>
<evidence type="ECO:0000269" key="6">
    <source>
    </source>
</evidence>
<evidence type="ECO:0000269" key="7">
    <source>
    </source>
</evidence>
<evidence type="ECO:0000269" key="8">
    <source>
    </source>
</evidence>
<evidence type="ECO:0000269" key="9">
    <source>
    </source>
</evidence>
<evidence type="ECO:0000269" key="10">
    <source>
    </source>
</evidence>
<evidence type="ECO:0000269" key="11">
    <source>
    </source>
</evidence>
<evidence type="ECO:0000269" key="12">
    <source>
    </source>
</evidence>
<evidence type="ECO:0000269" key="13">
    <source>
    </source>
</evidence>
<evidence type="ECO:0000269" key="14">
    <source>
    </source>
</evidence>
<evidence type="ECO:0000269" key="15">
    <source>
    </source>
</evidence>
<evidence type="ECO:0000269" key="16">
    <source>
    </source>
</evidence>
<evidence type="ECO:0000303" key="17">
    <source>
    </source>
</evidence>
<evidence type="ECO:0000303" key="18">
    <source>
    </source>
</evidence>
<evidence type="ECO:0000305" key="19"/>
<gene>
    <name evidence="17" type="primary">TRI8</name>
</gene>